<proteinExistence type="inferred from homology"/>
<organism>
    <name type="scientific">Pseudomonas aeruginosa (strain ATCC 15692 / DSM 22644 / CIP 104116 / JCM 14847 / LMG 12228 / 1C / PRS 101 / PAO1)</name>
    <dbReference type="NCBI Taxonomy" id="208964"/>
    <lineage>
        <taxon>Bacteria</taxon>
        <taxon>Pseudomonadati</taxon>
        <taxon>Pseudomonadota</taxon>
        <taxon>Gammaproteobacteria</taxon>
        <taxon>Pseudomonadales</taxon>
        <taxon>Pseudomonadaceae</taxon>
        <taxon>Pseudomonas</taxon>
    </lineage>
</organism>
<comment type="function">
    <text evidence="1 4">Member of the two-component regulatory system DctB/DctD, which regulates C4-dicarboxylate transport via regulation of expression of the dctPQM operon and dctA (PubMed:21725012). DctB functions as a membrane-associated protein kinase that phosphorylates DctD in response to environmental signals (By similarity).</text>
</comment>
<comment type="catalytic activity">
    <reaction evidence="1">
        <text>ATP + protein L-histidine = ADP + protein N-phospho-L-histidine.</text>
        <dbReference type="EC" id="2.7.13.3"/>
    </reaction>
</comment>
<comment type="subcellular location">
    <subcellularLocation>
        <location evidence="6">Cell inner membrane</location>
        <topology evidence="2">Multi-pass membrane protein</topology>
    </subcellularLocation>
</comment>
<comment type="PTM">
    <text evidence="1">Autophosphorylated.</text>
</comment>
<gene>
    <name evidence="5" type="primary">dctB</name>
    <name evidence="7" type="ordered locus">PA5165</name>
</gene>
<accession>Q9HU20</accession>
<evidence type="ECO:0000250" key="1">
    <source>
        <dbReference type="UniProtKB" id="P13633"/>
    </source>
</evidence>
<evidence type="ECO:0000255" key="2"/>
<evidence type="ECO:0000255" key="3">
    <source>
        <dbReference type="PROSITE-ProRule" id="PRU00107"/>
    </source>
</evidence>
<evidence type="ECO:0000269" key="4">
    <source>
    </source>
</evidence>
<evidence type="ECO:0000303" key="5">
    <source>
    </source>
</evidence>
<evidence type="ECO:0000305" key="6"/>
<evidence type="ECO:0000312" key="7">
    <source>
        <dbReference type="EMBL" id="AAG08550.1"/>
    </source>
</evidence>
<protein>
    <recommendedName>
        <fullName evidence="6">C4-dicarboxylate transport sensor protein DctB</fullName>
        <ecNumber evidence="1">2.7.13.3</ecNumber>
    </recommendedName>
</protein>
<keyword id="KW-0067">ATP-binding</keyword>
<keyword id="KW-0997">Cell inner membrane</keyword>
<keyword id="KW-1003">Cell membrane</keyword>
<keyword id="KW-0175">Coiled coil</keyword>
<keyword id="KW-0418">Kinase</keyword>
<keyword id="KW-0472">Membrane</keyword>
<keyword id="KW-0547">Nucleotide-binding</keyword>
<keyword id="KW-0597">Phosphoprotein</keyword>
<keyword id="KW-1185">Reference proteome</keyword>
<keyword id="KW-0808">Transferase</keyword>
<keyword id="KW-0812">Transmembrane</keyword>
<keyword id="KW-1133">Transmembrane helix</keyword>
<keyword id="KW-0902">Two-component regulatory system</keyword>
<reference key="1">
    <citation type="journal article" date="2000" name="Nature">
        <title>Complete genome sequence of Pseudomonas aeruginosa PAO1, an opportunistic pathogen.</title>
        <authorList>
            <person name="Stover C.K."/>
            <person name="Pham X.-Q.T."/>
            <person name="Erwin A.L."/>
            <person name="Mizoguchi S.D."/>
            <person name="Warrener P."/>
            <person name="Hickey M.J."/>
            <person name="Brinkman F.S.L."/>
            <person name="Hufnagle W.O."/>
            <person name="Kowalik D.J."/>
            <person name="Lagrou M."/>
            <person name="Garber R.L."/>
            <person name="Goltry L."/>
            <person name="Tolentino E."/>
            <person name="Westbrock-Wadman S."/>
            <person name="Yuan Y."/>
            <person name="Brody L.L."/>
            <person name="Coulter S.N."/>
            <person name="Folger K.R."/>
            <person name="Kas A."/>
            <person name="Larbig K."/>
            <person name="Lim R.M."/>
            <person name="Smith K.A."/>
            <person name="Spencer D.H."/>
            <person name="Wong G.K.-S."/>
            <person name="Wu Z."/>
            <person name="Paulsen I.T."/>
            <person name="Reizer J."/>
            <person name="Saier M.H. Jr."/>
            <person name="Hancock R.E.W."/>
            <person name="Lory S."/>
            <person name="Olson M.V."/>
        </authorList>
    </citation>
    <scope>NUCLEOTIDE SEQUENCE [LARGE SCALE GENOMIC DNA]</scope>
    <source>
        <strain>ATCC 15692 / DSM 22644 / CIP 104116 / JCM 14847 / LMG 12228 / 1C / PRS 101 / PAO1</strain>
    </source>
</reference>
<reference key="2">
    <citation type="journal article" date="2011" name="J. Bacteriol.">
        <title>Identification of C(4)-dicarboxylate transport systems in Pseudomonas aeruginosa PAO1.</title>
        <authorList>
            <person name="Valentini M."/>
            <person name="Storelli N."/>
            <person name="Lapouge K."/>
        </authorList>
    </citation>
    <scope>FUNCTION</scope>
    <source>
        <strain>ATCC 15692 / DSM 22644 / CIP 104116 / JCM 14847 / LMG 12228 / 1C / PRS 101 / PAO1</strain>
    </source>
</reference>
<feature type="chain" id="PRO_0000435376" description="C4-dicarboxylate transport sensor protein DctB">
    <location>
        <begin position="1"/>
        <end position="612"/>
    </location>
</feature>
<feature type="transmembrane region" description="Helical" evidence="2">
    <location>
        <begin position="23"/>
        <end position="43"/>
    </location>
</feature>
<feature type="transmembrane region" description="Helical" evidence="2">
    <location>
        <begin position="292"/>
        <end position="312"/>
    </location>
</feature>
<feature type="domain" description="Histidine kinase" evidence="3">
    <location>
        <begin position="385"/>
        <end position="599"/>
    </location>
</feature>
<feature type="coiled-coil region" evidence="2">
    <location>
        <begin position="328"/>
        <end position="376"/>
    </location>
</feature>
<feature type="modified residue" description="Phosphohistidine; by autocatalysis" evidence="3">
    <location>
        <position position="388"/>
    </location>
</feature>
<dbReference type="EC" id="2.7.13.3" evidence="1"/>
<dbReference type="EMBL" id="AE004091">
    <property type="protein sequence ID" value="AAG08550.1"/>
    <property type="molecule type" value="Genomic_DNA"/>
</dbReference>
<dbReference type="PIR" id="F83000">
    <property type="entry name" value="F83000"/>
</dbReference>
<dbReference type="RefSeq" id="NP_253852.1">
    <property type="nucleotide sequence ID" value="NC_002516.2"/>
</dbReference>
<dbReference type="RefSeq" id="WP_003123664.1">
    <property type="nucleotide sequence ID" value="NZ_QZGE01000002.1"/>
</dbReference>
<dbReference type="SMR" id="Q9HU20"/>
<dbReference type="STRING" id="208964.PA5165"/>
<dbReference type="PaxDb" id="208964-PA5165"/>
<dbReference type="GeneID" id="879962"/>
<dbReference type="KEGG" id="pae:PA5165"/>
<dbReference type="PATRIC" id="fig|208964.12.peg.5413"/>
<dbReference type="PseudoCAP" id="PA5165"/>
<dbReference type="HOGENOM" id="CLU_000445_94_2_6"/>
<dbReference type="InParanoid" id="Q9HU20"/>
<dbReference type="OrthoDB" id="9772100at2"/>
<dbReference type="PhylomeDB" id="Q9HU20"/>
<dbReference type="BioCyc" id="PAER208964:G1FZ6-5282-MONOMER"/>
<dbReference type="Proteomes" id="UP000002438">
    <property type="component" value="Chromosome"/>
</dbReference>
<dbReference type="GO" id="GO:0005886">
    <property type="term" value="C:plasma membrane"/>
    <property type="evidence" value="ECO:0007669"/>
    <property type="project" value="UniProtKB-SubCell"/>
</dbReference>
<dbReference type="GO" id="GO:0005524">
    <property type="term" value="F:ATP binding"/>
    <property type="evidence" value="ECO:0007669"/>
    <property type="project" value="UniProtKB-KW"/>
</dbReference>
<dbReference type="GO" id="GO:0000155">
    <property type="term" value="F:phosphorelay sensor kinase activity"/>
    <property type="evidence" value="ECO:0007669"/>
    <property type="project" value="InterPro"/>
</dbReference>
<dbReference type="GO" id="GO:0032892">
    <property type="term" value="P:positive regulation of organic acid transport"/>
    <property type="evidence" value="ECO:0000315"/>
    <property type="project" value="PseudoCAP"/>
</dbReference>
<dbReference type="CDD" id="cd00082">
    <property type="entry name" value="HisKA"/>
    <property type="match status" value="1"/>
</dbReference>
<dbReference type="CDD" id="cd22249">
    <property type="entry name" value="UDM1_RNF168_RNF169-like"/>
    <property type="match status" value="1"/>
</dbReference>
<dbReference type="FunFam" id="3.30.450.20:FF:000127">
    <property type="entry name" value="C4-dicarboxylate transport sensor protein"/>
    <property type="match status" value="1"/>
</dbReference>
<dbReference type="FunFam" id="1.10.287.130:FF:000049">
    <property type="entry name" value="C4-dicarboxylate transport sensor protein DctB"/>
    <property type="match status" value="1"/>
</dbReference>
<dbReference type="Gene3D" id="1.10.287.130">
    <property type="match status" value="1"/>
</dbReference>
<dbReference type="Gene3D" id="6.10.250.3020">
    <property type="match status" value="1"/>
</dbReference>
<dbReference type="Gene3D" id="3.30.565.10">
    <property type="entry name" value="Histidine kinase-like ATPase, C-terminal domain"/>
    <property type="match status" value="1"/>
</dbReference>
<dbReference type="Gene3D" id="3.30.450.20">
    <property type="entry name" value="PAS domain"/>
    <property type="match status" value="2"/>
</dbReference>
<dbReference type="InterPro" id="IPR033479">
    <property type="entry name" value="dCache_1"/>
</dbReference>
<dbReference type="InterPro" id="IPR036890">
    <property type="entry name" value="HATPase_C_sf"/>
</dbReference>
<dbReference type="InterPro" id="IPR005467">
    <property type="entry name" value="His_kinase_dom"/>
</dbReference>
<dbReference type="InterPro" id="IPR003661">
    <property type="entry name" value="HisK_dim/P_dom"/>
</dbReference>
<dbReference type="InterPro" id="IPR036097">
    <property type="entry name" value="HisK_dim/P_sf"/>
</dbReference>
<dbReference type="InterPro" id="IPR029151">
    <property type="entry name" value="Sensor-like_sf"/>
</dbReference>
<dbReference type="InterPro" id="IPR004358">
    <property type="entry name" value="Sig_transdc_His_kin-like_C"/>
</dbReference>
<dbReference type="InterPro" id="IPR017055">
    <property type="entry name" value="Sig_transdc_His_kinase_DctB"/>
</dbReference>
<dbReference type="PANTHER" id="PTHR43065:SF46">
    <property type="entry name" value="C4-DICARBOXYLATE TRANSPORT SENSOR PROTEIN DCTB"/>
    <property type="match status" value="1"/>
</dbReference>
<dbReference type="PANTHER" id="PTHR43065">
    <property type="entry name" value="SENSOR HISTIDINE KINASE"/>
    <property type="match status" value="1"/>
</dbReference>
<dbReference type="Pfam" id="PF02743">
    <property type="entry name" value="dCache_1"/>
    <property type="match status" value="1"/>
</dbReference>
<dbReference type="Pfam" id="PF02518">
    <property type="entry name" value="HATPase_c"/>
    <property type="match status" value="1"/>
</dbReference>
<dbReference type="Pfam" id="PF00512">
    <property type="entry name" value="HisKA"/>
    <property type="match status" value="1"/>
</dbReference>
<dbReference type="PIRSF" id="PIRSF036431">
    <property type="entry name" value="STHK_DctB"/>
    <property type="match status" value="1"/>
</dbReference>
<dbReference type="PRINTS" id="PR00344">
    <property type="entry name" value="BCTRLSENSOR"/>
</dbReference>
<dbReference type="SMART" id="SM00387">
    <property type="entry name" value="HATPase_c"/>
    <property type="match status" value="1"/>
</dbReference>
<dbReference type="SMART" id="SM00388">
    <property type="entry name" value="HisKA"/>
    <property type="match status" value="1"/>
</dbReference>
<dbReference type="SUPFAM" id="SSF55874">
    <property type="entry name" value="ATPase domain of HSP90 chaperone/DNA topoisomerase II/histidine kinase"/>
    <property type="match status" value="1"/>
</dbReference>
<dbReference type="SUPFAM" id="SSF47384">
    <property type="entry name" value="Homodimeric domain of signal transducing histidine kinase"/>
    <property type="match status" value="1"/>
</dbReference>
<dbReference type="SUPFAM" id="SSF103190">
    <property type="entry name" value="Sensory domain-like"/>
    <property type="match status" value="1"/>
</dbReference>
<dbReference type="PROSITE" id="PS50109">
    <property type="entry name" value="HIS_KIN"/>
    <property type="match status" value="1"/>
</dbReference>
<name>DCTB_PSEAE</name>
<sequence>MPRILAATAGSFVLKAYFHRWRSLVILALLLAPLLWPLQYFAERYYSEQLAEQNRQTLDLYVANLLGTLRRYEELPQILGGLPVLRQALQQPGDPLLQKIANEALADIRRRTGADVIYLLQPDGTTQVASNWAQADSFVHRNFAFRPYYREAMQGRLARFFGLGTTSIKRGYYFASAVKEGSRIIGVLVVKVDLEHIERLWGNSPEQLLVIDNYGVVILSSREDWRFHASRPLSAAERDEIHANIPYPVQDPKPLRLQQSAWLSQSRTLPETGWTVSIYAPRTLIERPVRSVLLIGGATLLALLLLLTLLTLSRRHYLDRIALEAEAKRQLEERVLERTRELENANAQLQQEVHEREQAQRELMRAQDEVVQAGKLTALGTMSASISHELNQPLAAIRSYADNARVLLDHQRTEDARGNLEQISDLTTRMASIIAHLKAYARGARRAPENVQLQPAIEDALSMVASRRRAMNVELLRDVPDAPLWVQAGETRLRQILGNLLTNALDALAEKAPPRRLWVIASQDQHGVTLTLRDNGPGFSEDALAHAHEPFFTTKTTAKGLGLGLAICDNLLRALGGRLEMGNHLEGGAVVRLHLLPGVPGVAAMPQEETRA</sequence>